<gene>
    <name evidence="2" type="primary">infB</name>
    <name type="ordered locus">LCK_01099</name>
</gene>
<dbReference type="EMBL" id="DQ489736">
    <property type="protein sequence ID" value="ACA82926.1"/>
    <property type="molecule type" value="Genomic_DNA"/>
</dbReference>
<dbReference type="RefSeq" id="WP_004904724.1">
    <property type="nucleotide sequence ID" value="NC_010471.1"/>
</dbReference>
<dbReference type="SMR" id="B1MZH4"/>
<dbReference type="STRING" id="349519.LCK_01099"/>
<dbReference type="KEGG" id="lci:LCK_01099"/>
<dbReference type="eggNOG" id="COG0532">
    <property type="taxonomic scope" value="Bacteria"/>
</dbReference>
<dbReference type="HOGENOM" id="CLU_006301_5_0_9"/>
<dbReference type="OrthoDB" id="9811804at2"/>
<dbReference type="Proteomes" id="UP000002166">
    <property type="component" value="Chromosome"/>
</dbReference>
<dbReference type="GO" id="GO:0005829">
    <property type="term" value="C:cytosol"/>
    <property type="evidence" value="ECO:0007669"/>
    <property type="project" value="TreeGrafter"/>
</dbReference>
<dbReference type="GO" id="GO:0005525">
    <property type="term" value="F:GTP binding"/>
    <property type="evidence" value="ECO:0007669"/>
    <property type="project" value="UniProtKB-KW"/>
</dbReference>
<dbReference type="GO" id="GO:0003924">
    <property type="term" value="F:GTPase activity"/>
    <property type="evidence" value="ECO:0007669"/>
    <property type="project" value="UniProtKB-UniRule"/>
</dbReference>
<dbReference type="GO" id="GO:0003743">
    <property type="term" value="F:translation initiation factor activity"/>
    <property type="evidence" value="ECO:0007669"/>
    <property type="project" value="UniProtKB-UniRule"/>
</dbReference>
<dbReference type="CDD" id="cd01887">
    <property type="entry name" value="IF2_eIF5B"/>
    <property type="match status" value="1"/>
</dbReference>
<dbReference type="CDD" id="cd03702">
    <property type="entry name" value="IF2_mtIF2_II"/>
    <property type="match status" value="1"/>
</dbReference>
<dbReference type="CDD" id="cd03692">
    <property type="entry name" value="mtIF2_IVc"/>
    <property type="match status" value="1"/>
</dbReference>
<dbReference type="FunFam" id="2.40.30.10:FF:000007">
    <property type="entry name" value="Translation initiation factor IF-2"/>
    <property type="match status" value="1"/>
</dbReference>
<dbReference type="FunFam" id="2.40.30.10:FF:000008">
    <property type="entry name" value="Translation initiation factor IF-2"/>
    <property type="match status" value="1"/>
</dbReference>
<dbReference type="FunFam" id="3.40.50.10050:FF:000001">
    <property type="entry name" value="Translation initiation factor IF-2"/>
    <property type="match status" value="1"/>
</dbReference>
<dbReference type="FunFam" id="3.40.50.300:FF:000019">
    <property type="entry name" value="Translation initiation factor IF-2"/>
    <property type="match status" value="1"/>
</dbReference>
<dbReference type="Gene3D" id="3.40.50.300">
    <property type="entry name" value="P-loop containing nucleotide triphosphate hydrolases"/>
    <property type="match status" value="1"/>
</dbReference>
<dbReference type="Gene3D" id="2.40.30.10">
    <property type="entry name" value="Translation factors"/>
    <property type="match status" value="2"/>
</dbReference>
<dbReference type="Gene3D" id="3.40.50.10050">
    <property type="entry name" value="Translation initiation factor IF- 2, domain 3"/>
    <property type="match status" value="1"/>
</dbReference>
<dbReference type="HAMAP" id="MF_00100_B">
    <property type="entry name" value="IF_2_B"/>
    <property type="match status" value="1"/>
</dbReference>
<dbReference type="InterPro" id="IPR053905">
    <property type="entry name" value="EF-G-like_DII"/>
</dbReference>
<dbReference type="InterPro" id="IPR004161">
    <property type="entry name" value="EFTu-like_2"/>
</dbReference>
<dbReference type="InterPro" id="IPR044145">
    <property type="entry name" value="IF2_II"/>
</dbReference>
<dbReference type="InterPro" id="IPR006847">
    <property type="entry name" value="IF2_N"/>
</dbReference>
<dbReference type="InterPro" id="IPR027417">
    <property type="entry name" value="P-loop_NTPase"/>
</dbReference>
<dbReference type="InterPro" id="IPR005225">
    <property type="entry name" value="Small_GTP-bd"/>
</dbReference>
<dbReference type="InterPro" id="IPR000795">
    <property type="entry name" value="T_Tr_GTP-bd_dom"/>
</dbReference>
<dbReference type="InterPro" id="IPR000178">
    <property type="entry name" value="TF_IF2_bacterial-like"/>
</dbReference>
<dbReference type="InterPro" id="IPR015760">
    <property type="entry name" value="TIF_IF2"/>
</dbReference>
<dbReference type="InterPro" id="IPR023115">
    <property type="entry name" value="TIF_IF2_dom3"/>
</dbReference>
<dbReference type="InterPro" id="IPR036925">
    <property type="entry name" value="TIF_IF2_dom3_sf"/>
</dbReference>
<dbReference type="InterPro" id="IPR009000">
    <property type="entry name" value="Transl_B-barrel_sf"/>
</dbReference>
<dbReference type="NCBIfam" id="TIGR00487">
    <property type="entry name" value="IF-2"/>
    <property type="match status" value="1"/>
</dbReference>
<dbReference type="NCBIfam" id="TIGR00231">
    <property type="entry name" value="small_GTP"/>
    <property type="match status" value="1"/>
</dbReference>
<dbReference type="PANTHER" id="PTHR43381:SF5">
    <property type="entry name" value="TR-TYPE G DOMAIN-CONTAINING PROTEIN"/>
    <property type="match status" value="1"/>
</dbReference>
<dbReference type="PANTHER" id="PTHR43381">
    <property type="entry name" value="TRANSLATION INITIATION FACTOR IF-2-RELATED"/>
    <property type="match status" value="1"/>
</dbReference>
<dbReference type="Pfam" id="PF22042">
    <property type="entry name" value="EF-G_D2"/>
    <property type="match status" value="1"/>
</dbReference>
<dbReference type="Pfam" id="PF00009">
    <property type="entry name" value="GTP_EFTU"/>
    <property type="match status" value="1"/>
</dbReference>
<dbReference type="Pfam" id="PF03144">
    <property type="entry name" value="GTP_EFTU_D2"/>
    <property type="match status" value="1"/>
</dbReference>
<dbReference type="Pfam" id="PF11987">
    <property type="entry name" value="IF-2"/>
    <property type="match status" value="1"/>
</dbReference>
<dbReference type="Pfam" id="PF04760">
    <property type="entry name" value="IF2_N"/>
    <property type="match status" value="1"/>
</dbReference>
<dbReference type="SUPFAM" id="SSF52156">
    <property type="entry name" value="Initiation factor IF2/eIF5b, domain 3"/>
    <property type="match status" value="1"/>
</dbReference>
<dbReference type="SUPFAM" id="SSF52540">
    <property type="entry name" value="P-loop containing nucleoside triphosphate hydrolases"/>
    <property type="match status" value="1"/>
</dbReference>
<dbReference type="SUPFAM" id="SSF50447">
    <property type="entry name" value="Translation proteins"/>
    <property type="match status" value="2"/>
</dbReference>
<dbReference type="PROSITE" id="PS51722">
    <property type="entry name" value="G_TR_2"/>
    <property type="match status" value="1"/>
</dbReference>
<organism>
    <name type="scientific">Leuconostoc citreum (strain KM20)</name>
    <dbReference type="NCBI Taxonomy" id="349519"/>
    <lineage>
        <taxon>Bacteria</taxon>
        <taxon>Bacillati</taxon>
        <taxon>Bacillota</taxon>
        <taxon>Bacilli</taxon>
        <taxon>Lactobacillales</taxon>
        <taxon>Lactobacillaceae</taxon>
        <taxon>Leuconostoc</taxon>
    </lineage>
</organism>
<evidence type="ECO:0000250" key="1"/>
<evidence type="ECO:0000255" key="2">
    <source>
        <dbReference type="HAMAP-Rule" id="MF_00100"/>
    </source>
</evidence>
<evidence type="ECO:0000256" key="3">
    <source>
        <dbReference type="SAM" id="MobiDB-lite"/>
    </source>
</evidence>
<protein>
    <recommendedName>
        <fullName evidence="2">Translation initiation factor IF-2</fullName>
    </recommendedName>
</protein>
<sequence length="840" mass="91145">MTEEKKFSSSNRPARKQAVPERKELPASQRRHAAKLTDGTNSSAGTTPRSNKPARQGQSQGQGQNRHTNSSRSNTQGGNASRPNQSKSQGQGGRNNQRPGSRTQASEGRPMIREKKNWSTKPREGQIDYSKKTDNSLKQYVSENEKRKQAAAAKTTKKPAEQSKKAAEKPAQTKPKTAETKTTATTTQSGTGKFGGALASGNNSARNNSRKRNTNGTGQQTPRRNDKPRGSKKSRRIAAKKGPAVPATERKEQPLPAVLEYRIGMNVQDLSKLLHRDTAEIIKKLFLLGIVTNQNQSLDADTIEILAADYGIESQLKEEEDVADIDKFFEDDTIDESKLVARPPVVTIMGHVDHGKTTLLDYLRNSNVTEGEAGGITQHIGAYQTQLNGKTITFLDTPGHAAFTEMRARGANVTDLTILVVAADDGVMPQTIEAINHAKAAETPIIVAVNKIDKPGANPDEVMNQLMAYDLVPEEYGGDTIFVKISAKFGQNVDELLEMILLQAEVLELKANPDVPARGSVIEARLDKGRGPVATVLVQQGTMRVGDPIVVGNTYGRVRTMTNERGIELAEALPATPVQITGINEVPQAGDRFIVMADEKTARAAGEERAKRAQEAIRNSGSVVTLDTLFSTMSEKAMKTVPVIVKADVQGSVEALSGSLKKIEVDGVRVDIIHTAVGAINESDVTLASASGAIIIGFNVRSTPLAKSQADSDKVDIRFYNVIYNAIDDVEAAMKGQLEPVFEEKVIGNVTVKELFKFSKVGIIAGAMVEEGKITKDSKVRIMRDNVVVYDGEVASLQRGKDSVNEVKMGYEFGFTVAKYNDIRVGDTVEAYIMEEVKVK</sequence>
<keyword id="KW-0963">Cytoplasm</keyword>
<keyword id="KW-0342">GTP-binding</keyword>
<keyword id="KW-0396">Initiation factor</keyword>
<keyword id="KW-0547">Nucleotide-binding</keyword>
<keyword id="KW-0648">Protein biosynthesis</keyword>
<keyword id="KW-1185">Reference proteome</keyword>
<feature type="chain" id="PRO_0000335487" description="Translation initiation factor IF-2">
    <location>
        <begin position="1"/>
        <end position="840"/>
    </location>
</feature>
<feature type="domain" description="tr-type G">
    <location>
        <begin position="341"/>
        <end position="510"/>
    </location>
</feature>
<feature type="region of interest" description="Disordered" evidence="3">
    <location>
        <begin position="1"/>
        <end position="251"/>
    </location>
</feature>
<feature type="region of interest" description="G1" evidence="1">
    <location>
        <begin position="350"/>
        <end position="357"/>
    </location>
</feature>
<feature type="region of interest" description="G2" evidence="1">
    <location>
        <begin position="375"/>
        <end position="379"/>
    </location>
</feature>
<feature type="region of interest" description="G3" evidence="1">
    <location>
        <begin position="396"/>
        <end position="399"/>
    </location>
</feature>
<feature type="region of interest" description="G4" evidence="1">
    <location>
        <begin position="450"/>
        <end position="453"/>
    </location>
</feature>
<feature type="region of interest" description="G5" evidence="1">
    <location>
        <begin position="486"/>
        <end position="488"/>
    </location>
</feature>
<feature type="compositionally biased region" description="Polar residues" evidence="3">
    <location>
        <begin position="38"/>
        <end position="50"/>
    </location>
</feature>
<feature type="compositionally biased region" description="Polar residues" evidence="3">
    <location>
        <begin position="65"/>
        <end position="83"/>
    </location>
</feature>
<feature type="compositionally biased region" description="Low complexity" evidence="3">
    <location>
        <begin position="84"/>
        <end position="102"/>
    </location>
</feature>
<feature type="compositionally biased region" description="Basic and acidic residues" evidence="3">
    <location>
        <begin position="110"/>
        <end position="135"/>
    </location>
</feature>
<feature type="compositionally biased region" description="Basic and acidic residues" evidence="3">
    <location>
        <begin position="158"/>
        <end position="168"/>
    </location>
</feature>
<feature type="compositionally biased region" description="Low complexity" evidence="3">
    <location>
        <begin position="169"/>
        <end position="207"/>
    </location>
</feature>
<feature type="compositionally biased region" description="Basic residues" evidence="3">
    <location>
        <begin position="230"/>
        <end position="239"/>
    </location>
</feature>
<feature type="binding site" evidence="2">
    <location>
        <begin position="350"/>
        <end position="357"/>
    </location>
    <ligand>
        <name>GTP</name>
        <dbReference type="ChEBI" id="CHEBI:37565"/>
    </ligand>
</feature>
<feature type="binding site" evidence="2">
    <location>
        <begin position="396"/>
        <end position="400"/>
    </location>
    <ligand>
        <name>GTP</name>
        <dbReference type="ChEBI" id="CHEBI:37565"/>
    </ligand>
</feature>
<feature type="binding site" evidence="2">
    <location>
        <begin position="450"/>
        <end position="453"/>
    </location>
    <ligand>
        <name>GTP</name>
        <dbReference type="ChEBI" id="CHEBI:37565"/>
    </ligand>
</feature>
<reference key="1">
    <citation type="journal article" date="2008" name="J. Bacteriol.">
        <title>Complete genome sequence of Leuconostoc citreum KM20.</title>
        <authorList>
            <person name="Kim J.F."/>
            <person name="Jeong H."/>
            <person name="Lee J.-S."/>
            <person name="Choi S.-H."/>
            <person name="Ha M."/>
            <person name="Hur C.-G."/>
            <person name="Kim J.-S."/>
            <person name="Lee S."/>
            <person name="Park H.-S."/>
            <person name="Park Y.-H."/>
            <person name="Oh T.K."/>
        </authorList>
    </citation>
    <scope>NUCLEOTIDE SEQUENCE [LARGE SCALE GENOMIC DNA]</scope>
    <source>
        <strain>KM20</strain>
    </source>
</reference>
<name>IF2_LEUCK</name>
<accession>B1MZH4</accession>
<comment type="function">
    <text evidence="2">One of the essential components for the initiation of protein synthesis. Protects formylmethionyl-tRNA from spontaneous hydrolysis and promotes its binding to the 30S ribosomal subunits. Also involved in the hydrolysis of GTP during the formation of the 70S ribosomal complex.</text>
</comment>
<comment type="subcellular location">
    <subcellularLocation>
        <location evidence="2">Cytoplasm</location>
    </subcellularLocation>
</comment>
<comment type="similarity">
    <text evidence="2">Belongs to the TRAFAC class translation factor GTPase superfamily. Classic translation factor GTPase family. IF-2 subfamily.</text>
</comment>
<proteinExistence type="inferred from homology"/>